<comment type="function">
    <text evidence="1">Binds to the 23S rRNA.</text>
</comment>
<comment type="similarity">
    <text evidence="1">Belongs to the bacterial ribosomal protein bL9 family.</text>
</comment>
<feature type="chain" id="PRO_1000126890" description="Large ribosomal subunit protein bL9">
    <location>
        <begin position="1"/>
        <end position="147"/>
    </location>
</feature>
<evidence type="ECO:0000255" key="1">
    <source>
        <dbReference type="HAMAP-Rule" id="MF_00503"/>
    </source>
</evidence>
<evidence type="ECO:0000305" key="2"/>
<protein>
    <recommendedName>
        <fullName evidence="1">Large ribosomal subunit protein bL9</fullName>
    </recommendedName>
    <alternativeName>
        <fullName evidence="2">50S ribosomal protein L9</fullName>
    </alternativeName>
</protein>
<accession>B2V1T2</accession>
<gene>
    <name evidence="1" type="primary">rplI</name>
    <name type="ordered locus">CLH_3376</name>
</gene>
<dbReference type="EMBL" id="CP001078">
    <property type="protein sequence ID" value="ACD53480.1"/>
    <property type="molecule type" value="Genomic_DNA"/>
</dbReference>
<dbReference type="RefSeq" id="WP_012425064.1">
    <property type="nucleotide sequence ID" value="NC_010723.1"/>
</dbReference>
<dbReference type="SMR" id="B2V1T2"/>
<dbReference type="KEGG" id="cbt:CLH_3376"/>
<dbReference type="HOGENOM" id="CLU_078938_3_0_9"/>
<dbReference type="GO" id="GO:1990904">
    <property type="term" value="C:ribonucleoprotein complex"/>
    <property type="evidence" value="ECO:0007669"/>
    <property type="project" value="UniProtKB-KW"/>
</dbReference>
<dbReference type="GO" id="GO:0005840">
    <property type="term" value="C:ribosome"/>
    <property type="evidence" value="ECO:0007669"/>
    <property type="project" value="UniProtKB-KW"/>
</dbReference>
<dbReference type="GO" id="GO:0019843">
    <property type="term" value="F:rRNA binding"/>
    <property type="evidence" value="ECO:0007669"/>
    <property type="project" value="UniProtKB-UniRule"/>
</dbReference>
<dbReference type="GO" id="GO:0003735">
    <property type="term" value="F:structural constituent of ribosome"/>
    <property type="evidence" value="ECO:0007669"/>
    <property type="project" value="InterPro"/>
</dbReference>
<dbReference type="GO" id="GO:0006412">
    <property type="term" value="P:translation"/>
    <property type="evidence" value="ECO:0007669"/>
    <property type="project" value="UniProtKB-UniRule"/>
</dbReference>
<dbReference type="FunFam" id="3.40.5.10:FF:000002">
    <property type="entry name" value="50S ribosomal protein L9"/>
    <property type="match status" value="1"/>
</dbReference>
<dbReference type="Gene3D" id="3.10.430.100">
    <property type="entry name" value="Ribosomal protein L9, C-terminal domain"/>
    <property type="match status" value="1"/>
</dbReference>
<dbReference type="Gene3D" id="3.40.5.10">
    <property type="entry name" value="Ribosomal protein L9, N-terminal domain"/>
    <property type="match status" value="1"/>
</dbReference>
<dbReference type="HAMAP" id="MF_00503">
    <property type="entry name" value="Ribosomal_bL9"/>
    <property type="match status" value="1"/>
</dbReference>
<dbReference type="InterPro" id="IPR000244">
    <property type="entry name" value="Ribosomal_bL9"/>
</dbReference>
<dbReference type="InterPro" id="IPR009027">
    <property type="entry name" value="Ribosomal_bL9/RNase_H1_N"/>
</dbReference>
<dbReference type="InterPro" id="IPR020594">
    <property type="entry name" value="Ribosomal_bL9_bac/chp"/>
</dbReference>
<dbReference type="InterPro" id="IPR020069">
    <property type="entry name" value="Ribosomal_bL9_C"/>
</dbReference>
<dbReference type="InterPro" id="IPR036791">
    <property type="entry name" value="Ribosomal_bL9_C_sf"/>
</dbReference>
<dbReference type="InterPro" id="IPR020070">
    <property type="entry name" value="Ribosomal_bL9_N"/>
</dbReference>
<dbReference type="InterPro" id="IPR036935">
    <property type="entry name" value="Ribosomal_bL9_N_sf"/>
</dbReference>
<dbReference type="NCBIfam" id="TIGR00158">
    <property type="entry name" value="L9"/>
    <property type="match status" value="1"/>
</dbReference>
<dbReference type="PANTHER" id="PTHR21368">
    <property type="entry name" value="50S RIBOSOMAL PROTEIN L9"/>
    <property type="match status" value="1"/>
</dbReference>
<dbReference type="Pfam" id="PF03948">
    <property type="entry name" value="Ribosomal_L9_C"/>
    <property type="match status" value="1"/>
</dbReference>
<dbReference type="Pfam" id="PF01281">
    <property type="entry name" value="Ribosomal_L9_N"/>
    <property type="match status" value="1"/>
</dbReference>
<dbReference type="SUPFAM" id="SSF55658">
    <property type="entry name" value="L9 N-domain-like"/>
    <property type="match status" value="1"/>
</dbReference>
<dbReference type="SUPFAM" id="SSF55653">
    <property type="entry name" value="Ribosomal protein L9 C-domain"/>
    <property type="match status" value="1"/>
</dbReference>
<dbReference type="PROSITE" id="PS00651">
    <property type="entry name" value="RIBOSOMAL_L9"/>
    <property type="match status" value="1"/>
</dbReference>
<reference key="1">
    <citation type="submission" date="2008-05" db="EMBL/GenBank/DDBJ databases">
        <title>Complete genome sequence of Clostridium botulinum E3 str. Alaska E43.</title>
        <authorList>
            <person name="Brinkac L.M."/>
            <person name="Brown J.L."/>
            <person name="Bruce D."/>
            <person name="Detter C."/>
            <person name="Munk C."/>
            <person name="Smith L.A."/>
            <person name="Smith T.J."/>
            <person name="Sutton G."/>
            <person name="Brettin T.S."/>
        </authorList>
    </citation>
    <scope>NUCLEOTIDE SEQUENCE [LARGE SCALE GENOMIC DNA]</scope>
    <source>
        <strain>Alaska E43 / Type E3</strain>
    </source>
</reference>
<name>RL9_CLOBA</name>
<sequence length="147" mass="16504">MKVILLQDVKKIGKKGEVIEASDGYARNFLFPRKLAQEATDSNMHILNNKKENERKKKLAEIEAAQKLAGELKGKEITIKTKIGESGKLFGAITSKDIASLIKTQYNVEIDKKKIVMDTIKLAGNYDIEVKLYPEVSTKMKVNILPQ</sequence>
<keyword id="KW-0687">Ribonucleoprotein</keyword>
<keyword id="KW-0689">Ribosomal protein</keyword>
<keyword id="KW-0694">RNA-binding</keyword>
<keyword id="KW-0699">rRNA-binding</keyword>
<organism>
    <name type="scientific">Clostridium botulinum (strain Alaska E43 / Type E3)</name>
    <dbReference type="NCBI Taxonomy" id="508767"/>
    <lineage>
        <taxon>Bacteria</taxon>
        <taxon>Bacillati</taxon>
        <taxon>Bacillota</taxon>
        <taxon>Clostridia</taxon>
        <taxon>Eubacteriales</taxon>
        <taxon>Clostridiaceae</taxon>
        <taxon>Clostridium</taxon>
    </lineage>
</organism>
<proteinExistence type="inferred from homology"/>